<sequence>MARSKTSHRWLKEHFDDPYVKMAQKDGYRSRASYKLLEIQEKDRILRPGMTVVDLGAAPGGWSQVTSRLIGDRGRLIASDILPMDSIPDVTFIQGDFTDDAVFALLLEAIGEQPVDLVISDMAPNMSGVKAADQPRAMYLCELALDLAGRVLRPGGDFLIKIFQGEGFDQYLRQVREGFDKVQMRKPLSSRDRSREQYLLARGFRGA</sequence>
<evidence type="ECO:0000255" key="1">
    <source>
        <dbReference type="HAMAP-Rule" id="MF_01547"/>
    </source>
</evidence>
<protein>
    <recommendedName>
        <fullName evidence="1">Ribosomal RNA large subunit methyltransferase E</fullName>
        <ecNumber evidence="1">2.1.1.166</ecNumber>
    </recommendedName>
    <alternativeName>
        <fullName evidence="1">23S rRNA Um2552 methyltransferase</fullName>
    </alternativeName>
    <alternativeName>
        <fullName evidence="1">rRNA (uridine-2'-O-)-methyltransferase</fullName>
    </alternativeName>
</protein>
<comment type="function">
    <text evidence="1">Specifically methylates the uridine in position 2552 of 23S rRNA at the 2'-O position of the ribose in the fully assembled 50S ribosomal subunit.</text>
</comment>
<comment type="catalytic activity">
    <reaction evidence="1">
        <text>uridine(2552) in 23S rRNA + S-adenosyl-L-methionine = 2'-O-methyluridine(2552) in 23S rRNA + S-adenosyl-L-homocysteine + H(+)</text>
        <dbReference type="Rhea" id="RHEA:42720"/>
        <dbReference type="Rhea" id="RHEA-COMP:10202"/>
        <dbReference type="Rhea" id="RHEA-COMP:10203"/>
        <dbReference type="ChEBI" id="CHEBI:15378"/>
        <dbReference type="ChEBI" id="CHEBI:57856"/>
        <dbReference type="ChEBI" id="CHEBI:59789"/>
        <dbReference type="ChEBI" id="CHEBI:65315"/>
        <dbReference type="ChEBI" id="CHEBI:74478"/>
        <dbReference type="EC" id="2.1.1.166"/>
    </reaction>
</comment>
<comment type="subcellular location">
    <subcellularLocation>
        <location evidence="1">Cytoplasm</location>
    </subcellularLocation>
</comment>
<comment type="similarity">
    <text evidence="1">Belongs to the class I-like SAM-binding methyltransferase superfamily. RNA methyltransferase RlmE family.</text>
</comment>
<proteinExistence type="inferred from homology"/>
<accession>C1DFL6</accession>
<keyword id="KW-0963">Cytoplasm</keyword>
<keyword id="KW-0489">Methyltransferase</keyword>
<keyword id="KW-0698">rRNA processing</keyword>
<keyword id="KW-0949">S-adenosyl-L-methionine</keyword>
<keyword id="KW-0808">Transferase</keyword>
<gene>
    <name evidence="1" type="primary">rlmE</name>
    <name evidence="1" type="synonym">ftsJ</name>
    <name evidence="1" type="synonym">rrmJ</name>
    <name type="ordered locus">Avin_42900</name>
</gene>
<reference key="1">
    <citation type="journal article" date="2009" name="J. Bacteriol.">
        <title>Genome sequence of Azotobacter vinelandii, an obligate aerobe specialized to support diverse anaerobic metabolic processes.</title>
        <authorList>
            <person name="Setubal J.C."/>
            <person name="Dos Santos P."/>
            <person name="Goldman B.S."/>
            <person name="Ertesvaag H."/>
            <person name="Espin G."/>
            <person name="Rubio L.M."/>
            <person name="Valla S."/>
            <person name="Almeida N.F."/>
            <person name="Balasubramanian D."/>
            <person name="Cromes L."/>
            <person name="Curatti L."/>
            <person name="Du Z."/>
            <person name="Godsy E."/>
            <person name="Goodner B."/>
            <person name="Hellner-Burris K."/>
            <person name="Hernandez J.A."/>
            <person name="Houmiel K."/>
            <person name="Imperial J."/>
            <person name="Kennedy C."/>
            <person name="Larson T.J."/>
            <person name="Latreille P."/>
            <person name="Ligon L.S."/>
            <person name="Lu J."/>
            <person name="Maerk M."/>
            <person name="Miller N.M."/>
            <person name="Norton S."/>
            <person name="O'Carroll I.P."/>
            <person name="Paulsen I."/>
            <person name="Raulfs E.C."/>
            <person name="Roemer R."/>
            <person name="Rosser J."/>
            <person name="Segura D."/>
            <person name="Slater S."/>
            <person name="Stricklin S.L."/>
            <person name="Studholme D.J."/>
            <person name="Sun J."/>
            <person name="Viana C.J."/>
            <person name="Wallin E."/>
            <person name="Wang B."/>
            <person name="Wheeler C."/>
            <person name="Zhu H."/>
            <person name="Dean D.R."/>
            <person name="Dixon R."/>
            <person name="Wood D."/>
        </authorList>
    </citation>
    <scope>NUCLEOTIDE SEQUENCE [LARGE SCALE GENOMIC DNA]</scope>
    <source>
        <strain>DJ / ATCC BAA-1303</strain>
    </source>
</reference>
<organism>
    <name type="scientific">Azotobacter vinelandii (strain DJ / ATCC BAA-1303)</name>
    <dbReference type="NCBI Taxonomy" id="322710"/>
    <lineage>
        <taxon>Bacteria</taxon>
        <taxon>Pseudomonadati</taxon>
        <taxon>Pseudomonadota</taxon>
        <taxon>Gammaproteobacteria</taxon>
        <taxon>Pseudomonadales</taxon>
        <taxon>Pseudomonadaceae</taxon>
        <taxon>Azotobacter</taxon>
    </lineage>
</organism>
<dbReference type="EC" id="2.1.1.166" evidence="1"/>
<dbReference type="EMBL" id="CP001157">
    <property type="protein sequence ID" value="ACO80412.1"/>
    <property type="molecule type" value="Genomic_DNA"/>
</dbReference>
<dbReference type="RefSeq" id="WP_012702780.1">
    <property type="nucleotide sequence ID" value="NC_012560.1"/>
</dbReference>
<dbReference type="SMR" id="C1DFL6"/>
<dbReference type="STRING" id="322710.Avin_42900"/>
<dbReference type="EnsemblBacteria" id="ACO80412">
    <property type="protein sequence ID" value="ACO80412"/>
    <property type="gene ID" value="Avin_42900"/>
</dbReference>
<dbReference type="GeneID" id="88187205"/>
<dbReference type="KEGG" id="avn:Avin_42900"/>
<dbReference type="eggNOG" id="COG0293">
    <property type="taxonomic scope" value="Bacteria"/>
</dbReference>
<dbReference type="HOGENOM" id="CLU_009422_4_0_6"/>
<dbReference type="OrthoDB" id="9790080at2"/>
<dbReference type="Proteomes" id="UP000002424">
    <property type="component" value="Chromosome"/>
</dbReference>
<dbReference type="GO" id="GO:0005737">
    <property type="term" value="C:cytoplasm"/>
    <property type="evidence" value="ECO:0007669"/>
    <property type="project" value="UniProtKB-SubCell"/>
</dbReference>
<dbReference type="GO" id="GO:0008650">
    <property type="term" value="F:rRNA (uridine-2'-O-)-methyltransferase activity"/>
    <property type="evidence" value="ECO:0007669"/>
    <property type="project" value="UniProtKB-UniRule"/>
</dbReference>
<dbReference type="FunFam" id="3.40.50.150:FF:000005">
    <property type="entry name" value="Ribosomal RNA large subunit methyltransferase E"/>
    <property type="match status" value="1"/>
</dbReference>
<dbReference type="Gene3D" id="3.40.50.150">
    <property type="entry name" value="Vaccinia Virus protein VP39"/>
    <property type="match status" value="1"/>
</dbReference>
<dbReference type="HAMAP" id="MF_01547">
    <property type="entry name" value="RNA_methyltr_E"/>
    <property type="match status" value="1"/>
</dbReference>
<dbReference type="InterPro" id="IPR050082">
    <property type="entry name" value="RNA_methyltr_RlmE"/>
</dbReference>
<dbReference type="InterPro" id="IPR002877">
    <property type="entry name" value="RNA_MeTrfase_FtsJ_dom"/>
</dbReference>
<dbReference type="InterPro" id="IPR015507">
    <property type="entry name" value="rRNA-MeTfrase_E"/>
</dbReference>
<dbReference type="InterPro" id="IPR029063">
    <property type="entry name" value="SAM-dependent_MTases_sf"/>
</dbReference>
<dbReference type="NCBIfam" id="NF008390">
    <property type="entry name" value="PRK11188.1"/>
    <property type="match status" value="1"/>
</dbReference>
<dbReference type="PANTHER" id="PTHR10920">
    <property type="entry name" value="RIBOSOMAL RNA METHYLTRANSFERASE"/>
    <property type="match status" value="1"/>
</dbReference>
<dbReference type="PANTHER" id="PTHR10920:SF18">
    <property type="entry name" value="RRNA METHYLTRANSFERASE 2, MITOCHONDRIAL"/>
    <property type="match status" value="1"/>
</dbReference>
<dbReference type="Pfam" id="PF01728">
    <property type="entry name" value="FtsJ"/>
    <property type="match status" value="1"/>
</dbReference>
<dbReference type="PIRSF" id="PIRSF005461">
    <property type="entry name" value="23S_rRNA_mtase"/>
    <property type="match status" value="1"/>
</dbReference>
<dbReference type="SUPFAM" id="SSF53335">
    <property type="entry name" value="S-adenosyl-L-methionine-dependent methyltransferases"/>
    <property type="match status" value="1"/>
</dbReference>
<name>RLME_AZOVD</name>
<feature type="chain" id="PRO_1000215446" description="Ribosomal RNA large subunit methyltransferase E">
    <location>
        <begin position="1"/>
        <end position="207"/>
    </location>
</feature>
<feature type="active site" description="Proton acceptor" evidence="1">
    <location>
        <position position="161"/>
    </location>
</feature>
<feature type="binding site" evidence="1">
    <location>
        <position position="60"/>
    </location>
    <ligand>
        <name>S-adenosyl-L-methionine</name>
        <dbReference type="ChEBI" id="CHEBI:59789"/>
    </ligand>
</feature>
<feature type="binding site" evidence="1">
    <location>
        <position position="62"/>
    </location>
    <ligand>
        <name>S-adenosyl-L-methionine</name>
        <dbReference type="ChEBI" id="CHEBI:59789"/>
    </ligand>
</feature>
<feature type="binding site" evidence="1">
    <location>
        <position position="80"/>
    </location>
    <ligand>
        <name>S-adenosyl-L-methionine</name>
        <dbReference type="ChEBI" id="CHEBI:59789"/>
    </ligand>
</feature>
<feature type="binding site" evidence="1">
    <location>
        <position position="96"/>
    </location>
    <ligand>
        <name>S-adenosyl-L-methionine</name>
        <dbReference type="ChEBI" id="CHEBI:59789"/>
    </ligand>
</feature>
<feature type="binding site" evidence="1">
    <location>
        <position position="121"/>
    </location>
    <ligand>
        <name>S-adenosyl-L-methionine</name>
        <dbReference type="ChEBI" id="CHEBI:59789"/>
    </ligand>
</feature>